<organism>
    <name type="scientific">Saccharomyces cerevisiae (strain RM11-1a)</name>
    <name type="common">Baker's yeast</name>
    <dbReference type="NCBI Taxonomy" id="285006"/>
    <lineage>
        <taxon>Eukaryota</taxon>
        <taxon>Fungi</taxon>
        <taxon>Dikarya</taxon>
        <taxon>Ascomycota</taxon>
        <taxon>Saccharomycotina</taxon>
        <taxon>Saccharomycetes</taxon>
        <taxon>Saccharomycetales</taxon>
        <taxon>Saccharomycetaceae</taxon>
        <taxon>Saccharomyces</taxon>
    </lineage>
</organism>
<comment type="subcellular location">
    <subcellularLocation>
        <location evidence="1">Cytoplasm</location>
    </subcellularLocation>
    <subcellularLocation>
        <location evidence="1">Cell projection</location>
    </subcellularLocation>
    <text evidence="1">Concentrates at cytoplasmic punctate structures and localizes at the mating projection tip.</text>
</comment>
<comment type="similarity">
    <text evidence="2">Belongs to the TDA2 family.</text>
</comment>
<feature type="initiator methionine" description="Removed" evidence="1">
    <location>
        <position position="1"/>
    </location>
</feature>
<feature type="chain" id="PRO_0000410734" description="Topoisomerase I damage affected protein 2">
    <location>
        <begin position="2"/>
        <end position="126"/>
    </location>
</feature>
<feature type="modified residue" description="N-acetylserine" evidence="1">
    <location>
        <position position="2"/>
    </location>
</feature>
<proteinExistence type="inferred from homology"/>
<reference key="1">
    <citation type="submission" date="2005-03" db="EMBL/GenBank/DDBJ databases">
        <title>Annotation of the Saccharomyces cerevisiae RM11-1a genome.</title>
        <authorList>
            <consortium name="The Broad Institute Genome Sequencing Platform"/>
            <person name="Birren B.W."/>
            <person name="Lander E.S."/>
            <person name="Galagan J.E."/>
            <person name="Nusbaum C."/>
            <person name="Devon K."/>
            <person name="Cuomo C."/>
            <person name="Jaffe D.B."/>
            <person name="Butler J."/>
            <person name="Alvarez P."/>
            <person name="Gnerre S."/>
            <person name="Grabherr M."/>
            <person name="Kleber M."/>
            <person name="Mauceli E.W."/>
            <person name="Brockman W."/>
            <person name="MacCallum I.A."/>
            <person name="Rounsley S."/>
            <person name="Young S.K."/>
            <person name="LaButti K."/>
            <person name="Pushparaj V."/>
            <person name="DeCaprio D."/>
            <person name="Crawford M."/>
            <person name="Koehrsen M."/>
            <person name="Engels R."/>
            <person name="Montgomery P."/>
            <person name="Pearson M."/>
            <person name="Howarth C."/>
            <person name="Larson L."/>
            <person name="Luoma S."/>
            <person name="White J."/>
            <person name="O'Leary S."/>
            <person name="Kodira C.D."/>
            <person name="Zeng Q."/>
            <person name="Yandava C."/>
            <person name="Alvarado L."/>
            <person name="Pratt S."/>
            <person name="Kruglyak L."/>
        </authorList>
    </citation>
    <scope>NUCLEOTIDE SEQUENCE [LARGE SCALE GENOMIC DNA]</scope>
    <source>
        <strain>RM11-1a</strain>
    </source>
</reference>
<dbReference type="EMBL" id="CH408052">
    <property type="protein sequence ID" value="EDV08901.1"/>
    <property type="molecule type" value="Genomic_DNA"/>
</dbReference>
<dbReference type="SMR" id="B3LRI8"/>
<dbReference type="HOGENOM" id="CLU_137494_1_0_1"/>
<dbReference type="OrthoDB" id="38744at4893"/>
<dbReference type="Proteomes" id="UP000008335">
    <property type="component" value="Unassembled WGS sequence"/>
</dbReference>
<dbReference type="GO" id="GO:0042995">
    <property type="term" value="C:cell projection"/>
    <property type="evidence" value="ECO:0007669"/>
    <property type="project" value="UniProtKB-SubCell"/>
</dbReference>
<dbReference type="GO" id="GO:0005737">
    <property type="term" value="C:cytoplasm"/>
    <property type="evidence" value="ECO:0007669"/>
    <property type="project" value="UniProtKB-SubCell"/>
</dbReference>
<dbReference type="CDD" id="cd21457">
    <property type="entry name" value="DLC-like_TDA2"/>
    <property type="match status" value="1"/>
</dbReference>
<dbReference type="FunFam" id="3.30.1140.40:FF:000005">
    <property type="entry name" value="Topoisomerase I damage affected protein 2"/>
    <property type="match status" value="1"/>
</dbReference>
<dbReference type="Gene3D" id="3.30.1140.40">
    <property type="entry name" value="Tctex-1"/>
    <property type="match status" value="1"/>
</dbReference>
<dbReference type="InterPro" id="IPR038586">
    <property type="entry name" value="Tctex-1-like_sf"/>
</dbReference>
<gene>
    <name type="primary">TDA2</name>
    <name type="ORF">SCRG_04546</name>
</gene>
<protein>
    <recommendedName>
        <fullName>Topoisomerase I damage affected protein 2</fullName>
    </recommendedName>
</protein>
<evidence type="ECO:0000250" key="1">
    <source>
        <dbReference type="UniProtKB" id="P40045"/>
    </source>
</evidence>
<evidence type="ECO:0000305" key="2"/>
<name>TDA2_YEAS1</name>
<accession>B3LRI8</accession>
<keyword id="KW-0007">Acetylation</keyword>
<keyword id="KW-0966">Cell projection</keyword>
<keyword id="KW-0963">Cytoplasm</keyword>
<sequence>MSMQIEIKDGRSDNSPLPERKLVTLIQESYDSLKDDNEINLSTESTSNLLIKLVLEKLEKHSSLYKYIASVTTLNIEGLNEENANFSLKNDIGASWESKKDGIFNYKLEDKNSNECYLITILWLHK</sequence>